<feature type="chain" id="PRO_1000048518" description="DNA replication and repair protein RecF">
    <location>
        <begin position="1"/>
        <end position="377"/>
    </location>
</feature>
<feature type="binding site" evidence="1">
    <location>
        <begin position="30"/>
        <end position="37"/>
    </location>
    <ligand>
        <name>ATP</name>
        <dbReference type="ChEBI" id="CHEBI:30616"/>
    </ligand>
</feature>
<reference key="1">
    <citation type="journal article" date="2007" name="Appl. Environ. Microbiol.">
        <title>Genome sequence of the cellulolytic gliding bacterium Cytophaga hutchinsonii.</title>
        <authorList>
            <person name="Xie G."/>
            <person name="Bruce D.C."/>
            <person name="Challacombe J.F."/>
            <person name="Chertkov O."/>
            <person name="Detter J.C."/>
            <person name="Gilna P."/>
            <person name="Han C.S."/>
            <person name="Lucas S."/>
            <person name="Misra M."/>
            <person name="Myers G.L."/>
            <person name="Richardson P."/>
            <person name="Tapia R."/>
            <person name="Thayer N."/>
            <person name="Thompson L.S."/>
            <person name="Brettin T.S."/>
            <person name="Henrissat B."/>
            <person name="Wilson D.B."/>
            <person name="McBride M.J."/>
        </authorList>
    </citation>
    <scope>NUCLEOTIDE SEQUENCE [LARGE SCALE GENOMIC DNA]</scope>
    <source>
        <strain>ATCC 33406 / DSM 1761 / JCM 20678 / CIP 103989 / IAM 12607 / NBRC 15051 / NCIMB 9469 / D465</strain>
    </source>
</reference>
<accession>Q11NR3</accession>
<protein>
    <recommendedName>
        <fullName evidence="1">DNA replication and repair protein RecF</fullName>
    </recommendedName>
</protein>
<name>RECF_CYTH3</name>
<evidence type="ECO:0000255" key="1">
    <source>
        <dbReference type="HAMAP-Rule" id="MF_00365"/>
    </source>
</evidence>
<proteinExistence type="inferred from homology"/>
<sequence length="377" mass="43620">MYIEKISLLNFKNYPELELSFSAGINLFAGLNGSGKTNLLDSIYCLCLTKSFLSTTDQQTITTGQGYFSALGWFQENAKEFKIQYDFDGKKKSFTVDKKPYAKISEHIGRFPAIVLTPHDTDLIRNSSEDRRRFFDTLFSQADHVYLDALIRYNHFIKQRNALLKQAADGMLVDRILMDAYDHNLLQSGKIIAQKRDEYLKRLLPIFQEYYSLLSPDHEATDIEYETNVLSADFEQVFKDSYSKDLILQRTNKGVHKDDFKFLINNEPIKHYGSQGQQKTFVIALKLAQYELLKACTGHNPILLMDDIFDKLDDLRIEKLIHLVQKYITGQLFISDARPDRSSIFFQSNTKDFRMFIIDRGKVEQSPPSQSELNTDV</sequence>
<comment type="function">
    <text evidence="1">The RecF protein is involved in DNA metabolism; it is required for DNA replication and normal SOS inducibility. RecF binds preferentially to single-stranded, linear DNA. It also seems to bind ATP.</text>
</comment>
<comment type="subcellular location">
    <subcellularLocation>
        <location evidence="1">Cytoplasm</location>
    </subcellularLocation>
</comment>
<comment type="similarity">
    <text evidence="1">Belongs to the RecF family.</text>
</comment>
<organism>
    <name type="scientific">Cytophaga hutchinsonii (strain ATCC 33406 / DSM 1761 / CIP 103989 / NBRC 15051 / NCIMB 9469 / D465)</name>
    <dbReference type="NCBI Taxonomy" id="269798"/>
    <lineage>
        <taxon>Bacteria</taxon>
        <taxon>Pseudomonadati</taxon>
        <taxon>Bacteroidota</taxon>
        <taxon>Cytophagia</taxon>
        <taxon>Cytophagales</taxon>
        <taxon>Cytophagaceae</taxon>
        <taxon>Cytophaga</taxon>
    </lineage>
</organism>
<keyword id="KW-0067">ATP-binding</keyword>
<keyword id="KW-0963">Cytoplasm</keyword>
<keyword id="KW-0227">DNA damage</keyword>
<keyword id="KW-0234">DNA repair</keyword>
<keyword id="KW-0235">DNA replication</keyword>
<keyword id="KW-0238">DNA-binding</keyword>
<keyword id="KW-0547">Nucleotide-binding</keyword>
<keyword id="KW-1185">Reference proteome</keyword>
<keyword id="KW-0742">SOS response</keyword>
<gene>
    <name evidence="1" type="primary">recF</name>
    <name type="ordered locus">CHU_3717</name>
</gene>
<dbReference type="EMBL" id="CP000383">
    <property type="protein sequence ID" value="ABG60950.1"/>
    <property type="molecule type" value="Genomic_DNA"/>
</dbReference>
<dbReference type="RefSeq" id="WP_011587055.1">
    <property type="nucleotide sequence ID" value="NC_008255.1"/>
</dbReference>
<dbReference type="SMR" id="Q11NR3"/>
<dbReference type="STRING" id="269798.CHU_3717"/>
<dbReference type="KEGG" id="chu:CHU_3717"/>
<dbReference type="eggNOG" id="COG1195">
    <property type="taxonomic scope" value="Bacteria"/>
</dbReference>
<dbReference type="HOGENOM" id="CLU_040267_0_1_10"/>
<dbReference type="OrthoDB" id="9803889at2"/>
<dbReference type="Proteomes" id="UP000001822">
    <property type="component" value="Chromosome"/>
</dbReference>
<dbReference type="GO" id="GO:0005737">
    <property type="term" value="C:cytoplasm"/>
    <property type="evidence" value="ECO:0007669"/>
    <property type="project" value="UniProtKB-SubCell"/>
</dbReference>
<dbReference type="GO" id="GO:0005524">
    <property type="term" value="F:ATP binding"/>
    <property type="evidence" value="ECO:0007669"/>
    <property type="project" value="UniProtKB-UniRule"/>
</dbReference>
<dbReference type="GO" id="GO:0003697">
    <property type="term" value="F:single-stranded DNA binding"/>
    <property type="evidence" value="ECO:0007669"/>
    <property type="project" value="UniProtKB-UniRule"/>
</dbReference>
<dbReference type="GO" id="GO:0006260">
    <property type="term" value="P:DNA replication"/>
    <property type="evidence" value="ECO:0007669"/>
    <property type="project" value="UniProtKB-UniRule"/>
</dbReference>
<dbReference type="GO" id="GO:0000731">
    <property type="term" value="P:DNA synthesis involved in DNA repair"/>
    <property type="evidence" value="ECO:0007669"/>
    <property type="project" value="TreeGrafter"/>
</dbReference>
<dbReference type="GO" id="GO:0006302">
    <property type="term" value="P:double-strand break repair"/>
    <property type="evidence" value="ECO:0007669"/>
    <property type="project" value="TreeGrafter"/>
</dbReference>
<dbReference type="GO" id="GO:0009432">
    <property type="term" value="P:SOS response"/>
    <property type="evidence" value="ECO:0007669"/>
    <property type="project" value="UniProtKB-UniRule"/>
</dbReference>
<dbReference type="Gene3D" id="3.40.50.300">
    <property type="entry name" value="P-loop containing nucleotide triphosphate hydrolases"/>
    <property type="match status" value="1"/>
</dbReference>
<dbReference type="Gene3D" id="1.20.1050.90">
    <property type="entry name" value="RecF/RecN/SMC, N-terminal domain"/>
    <property type="match status" value="1"/>
</dbReference>
<dbReference type="HAMAP" id="MF_00365">
    <property type="entry name" value="RecF"/>
    <property type="match status" value="1"/>
</dbReference>
<dbReference type="InterPro" id="IPR001238">
    <property type="entry name" value="DNA-binding_RecF"/>
</dbReference>
<dbReference type="InterPro" id="IPR018078">
    <property type="entry name" value="DNA-binding_RecF_CS"/>
</dbReference>
<dbReference type="InterPro" id="IPR027417">
    <property type="entry name" value="P-loop_NTPase"/>
</dbReference>
<dbReference type="InterPro" id="IPR003395">
    <property type="entry name" value="RecF/RecN/SMC_N"/>
</dbReference>
<dbReference type="InterPro" id="IPR042174">
    <property type="entry name" value="RecF_2"/>
</dbReference>
<dbReference type="NCBIfam" id="TIGR00611">
    <property type="entry name" value="recf"/>
    <property type="match status" value="1"/>
</dbReference>
<dbReference type="PANTHER" id="PTHR32182">
    <property type="entry name" value="DNA REPLICATION AND REPAIR PROTEIN RECF"/>
    <property type="match status" value="1"/>
</dbReference>
<dbReference type="PANTHER" id="PTHR32182:SF0">
    <property type="entry name" value="DNA REPLICATION AND REPAIR PROTEIN RECF"/>
    <property type="match status" value="1"/>
</dbReference>
<dbReference type="Pfam" id="PF02463">
    <property type="entry name" value="SMC_N"/>
    <property type="match status" value="1"/>
</dbReference>
<dbReference type="SUPFAM" id="SSF52540">
    <property type="entry name" value="P-loop containing nucleoside triphosphate hydrolases"/>
    <property type="match status" value="1"/>
</dbReference>
<dbReference type="PROSITE" id="PS00618">
    <property type="entry name" value="RECF_2"/>
    <property type="match status" value="1"/>
</dbReference>